<protein>
    <recommendedName>
        <fullName evidence="1">UPF0276 protein ACIAD0933</fullName>
    </recommendedName>
</protein>
<feature type="chain" id="PRO_1000045467" description="UPF0276 protein ACIAD0933">
    <location>
        <begin position="1"/>
        <end position="287"/>
    </location>
</feature>
<evidence type="ECO:0000255" key="1">
    <source>
        <dbReference type="HAMAP-Rule" id="MF_00697"/>
    </source>
</evidence>
<comment type="similarity">
    <text evidence="1">Belongs to the UPF0276 family.</text>
</comment>
<sequence>MTELVGVGLGLRREFMDAFLNAETHPDFIEVAPENWMGFGGRHAKLLARCVEKAPLICHGLSLSIGGPHPLDLEFIQQVKLFLQRYQVQIYSEHLSYTHDGGYLYDLLPIPMTEAAVNYVAERILRVQDILGQRLVIENVSTYLMPNAEMPEAEFVREVLLKADCELLLDVNNVYVNSVNHDSDAYAFIDAMPKDRIRYLHVAGHEQVEKNLLIDTHGAAIRDPVWQLLQYSYQVCGVKPTLLERDFNIPSWAQLQTELSQIKIMQQQGSRNEGKANILSHNATTVL</sequence>
<name>Y933_ACIAD</name>
<reference key="1">
    <citation type="journal article" date="2004" name="Nucleic Acids Res.">
        <title>Unique features revealed by the genome sequence of Acinetobacter sp. ADP1, a versatile and naturally transformation competent bacterium.</title>
        <authorList>
            <person name="Barbe V."/>
            <person name="Vallenet D."/>
            <person name="Fonknechten N."/>
            <person name="Kreimeyer A."/>
            <person name="Oztas S."/>
            <person name="Labarre L."/>
            <person name="Cruveiller S."/>
            <person name="Robert C."/>
            <person name="Duprat S."/>
            <person name="Wincker P."/>
            <person name="Ornston L.N."/>
            <person name="Weissenbach J."/>
            <person name="Marliere P."/>
            <person name="Cohen G.N."/>
            <person name="Medigue C."/>
        </authorList>
    </citation>
    <scope>NUCLEOTIDE SEQUENCE [LARGE SCALE GENOMIC DNA]</scope>
    <source>
        <strain>ATCC 33305 / BD413 / ADP1</strain>
    </source>
</reference>
<gene>
    <name type="ordered locus">ACIAD0933</name>
</gene>
<proteinExistence type="inferred from homology"/>
<dbReference type="EMBL" id="CR543861">
    <property type="protein sequence ID" value="CAG67828.1"/>
    <property type="molecule type" value="Genomic_DNA"/>
</dbReference>
<dbReference type="RefSeq" id="WP_004921990.1">
    <property type="nucleotide sequence ID" value="NC_005966.1"/>
</dbReference>
<dbReference type="SMR" id="Q6FDN0"/>
<dbReference type="STRING" id="202950.GCA_001485005_02678"/>
<dbReference type="GeneID" id="45233389"/>
<dbReference type="KEGG" id="aci:ACIAD0933"/>
<dbReference type="eggNOG" id="COG3220">
    <property type="taxonomic scope" value="Bacteria"/>
</dbReference>
<dbReference type="HOGENOM" id="CLU_064263_0_0_6"/>
<dbReference type="OrthoDB" id="9763101at2"/>
<dbReference type="BioCyc" id="ASP62977:ACIAD_RS04305-MONOMER"/>
<dbReference type="Proteomes" id="UP000000430">
    <property type="component" value="Chromosome"/>
</dbReference>
<dbReference type="Gene3D" id="3.20.20.150">
    <property type="entry name" value="Divalent-metal-dependent TIM barrel enzymes"/>
    <property type="match status" value="1"/>
</dbReference>
<dbReference type="HAMAP" id="MF_00697">
    <property type="entry name" value="UPF0276"/>
    <property type="match status" value="1"/>
</dbReference>
<dbReference type="InterPro" id="IPR007801">
    <property type="entry name" value="MbnB/TglH/ChrH"/>
</dbReference>
<dbReference type="InterPro" id="IPR036237">
    <property type="entry name" value="Xyl_isomerase-like_sf"/>
</dbReference>
<dbReference type="NCBIfam" id="NF003818">
    <property type="entry name" value="PRK05409.1"/>
    <property type="match status" value="1"/>
</dbReference>
<dbReference type="PANTHER" id="PTHR42194">
    <property type="entry name" value="UPF0276 PROTEIN HI_1600"/>
    <property type="match status" value="1"/>
</dbReference>
<dbReference type="PANTHER" id="PTHR42194:SF1">
    <property type="entry name" value="UPF0276 PROTEIN HI_1600"/>
    <property type="match status" value="1"/>
</dbReference>
<dbReference type="Pfam" id="PF05114">
    <property type="entry name" value="MbnB_TglH_ChrH"/>
    <property type="match status" value="1"/>
</dbReference>
<dbReference type="SUPFAM" id="SSF51658">
    <property type="entry name" value="Xylose isomerase-like"/>
    <property type="match status" value="1"/>
</dbReference>
<accession>Q6FDN0</accession>
<organism>
    <name type="scientific">Acinetobacter baylyi (strain ATCC 33305 / BD413 / ADP1)</name>
    <dbReference type="NCBI Taxonomy" id="62977"/>
    <lineage>
        <taxon>Bacteria</taxon>
        <taxon>Pseudomonadati</taxon>
        <taxon>Pseudomonadota</taxon>
        <taxon>Gammaproteobacteria</taxon>
        <taxon>Moraxellales</taxon>
        <taxon>Moraxellaceae</taxon>
        <taxon>Acinetobacter</taxon>
    </lineage>
</organism>